<dbReference type="EC" id="5.6.1.7" evidence="1"/>
<dbReference type="EMBL" id="CP000413">
    <property type="protein sequence ID" value="ABJ59814.1"/>
    <property type="molecule type" value="Genomic_DNA"/>
</dbReference>
<dbReference type="RefSeq" id="WP_003647726.1">
    <property type="nucleotide sequence ID" value="NZ_WBMG01000001.1"/>
</dbReference>
<dbReference type="SMR" id="Q045Q8"/>
<dbReference type="GeneID" id="29639051"/>
<dbReference type="KEGG" id="lga:LGAS_0409"/>
<dbReference type="HOGENOM" id="CLU_016503_1_1_9"/>
<dbReference type="BioCyc" id="LGAS324831:G1G6Y-408-MONOMER"/>
<dbReference type="Proteomes" id="UP000000664">
    <property type="component" value="Chromosome"/>
</dbReference>
<dbReference type="GO" id="GO:0005737">
    <property type="term" value="C:cytoplasm"/>
    <property type="evidence" value="ECO:0007669"/>
    <property type="project" value="UniProtKB-SubCell"/>
</dbReference>
<dbReference type="GO" id="GO:0005524">
    <property type="term" value="F:ATP binding"/>
    <property type="evidence" value="ECO:0007669"/>
    <property type="project" value="UniProtKB-UniRule"/>
</dbReference>
<dbReference type="GO" id="GO:0140662">
    <property type="term" value="F:ATP-dependent protein folding chaperone"/>
    <property type="evidence" value="ECO:0007669"/>
    <property type="project" value="InterPro"/>
</dbReference>
<dbReference type="GO" id="GO:0016853">
    <property type="term" value="F:isomerase activity"/>
    <property type="evidence" value="ECO:0007669"/>
    <property type="project" value="UniProtKB-KW"/>
</dbReference>
<dbReference type="GO" id="GO:0051082">
    <property type="term" value="F:unfolded protein binding"/>
    <property type="evidence" value="ECO:0007669"/>
    <property type="project" value="UniProtKB-UniRule"/>
</dbReference>
<dbReference type="GO" id="GO:0042026">
    <property type="term" value="P:protein refolding"/>
    <property type="evidence" value="ECO:0007669"/>
    <property type="project" value="UniProtKB-UniRule"/>
</dbReference>
<dbReference type="CDD" id="cd03344">
    <property type="entry name" value="GroEL"/>
    <property type="match status" value="1"/>
</dbReference>
<dbReference type="FunFam" id="3.50.7.10:FF:000001">
    <property type="entry name" value="60 kDa chaperonin"/>
    <property type="match status" value="1"/>
</dbReference>
<dbReference type="Gene3D" id="3.50.7.10">
    <property type="entry name" value="GroEL"/>
    <property type="match status" value="1"/>
</dbReference>
<dbReference type="Gene3D" id="1.10.560.10">
    <property type="entry name" value="GroEL-like equatorial domain"/>
    <property type="match status" value="1"/>
</dbReference>
<dbReference type="Gene3D" id="3.30.260.10">
    <property type="entry name" value="TCP-1-like chaperonin intermediate domain"/>
    <property type="match status" value="1"/>
</dbReference>
<dbReference type="HAMAP" id="MF_00600">
    <property type="entry name" value="CH60"/>
    <property type="match status" value="1"/>
</dbReference>
<dbReference type="InterPro" id="IPR018370">
    <property type="entry name" value="Chaperonin_Cpn60_CS"/>
</dbReference>
<dbReference type="InterPro" id="IPR001844">
    <property type="entry name" value="Cpn60/GroEL"/>
</dbReference>
<dbReference type="InterPro" id="IPR002423">
    <property type="entry name" value="Cpn60/GroEL/TCP-1"/>
</dbReference>
<dbReference type="InterPro" id="IPR027409">
    <property type="entry name" value="GroEL-like_apical_dom_sf"/>
</dbReference>
<dbReference type="InterPro" id="IPR027413">
    <property type="entry name" value="GROEL-like_equatorial_sf"/>
</dbReference>
<dbReference type="InterPro" id="IPR027410">
    <property type="entry name" value="TCP-1-like_intermed_sf"/>
</dbReference>
<dbReference type="NCBIfam" id="TIGR02348">
    <property type="entry name" value="GroEL"/>
    <property type="match status" value="1"/>
</dbReference>
<dbReference type="NCBIfam" id="NF000592">
    <property type="entry name" value="PRK00013.1"/>
    <property type="match status" value="1"/>
</dbReference>
<dbReference type="NCBIfam" id="NF009487">
    <property type="entry name" value="PRK12849.1"/>
    <property type="match status" value="1"/>
</dbReference>
<dbReference type="NCBIfam" id="NF009488">
    <property type="entry name" value="PRK12850.1"/>
    <property type="match status" value="1"/>
</dbReference>
<dbReference type="NCBIfam" id="NF009489">
    <property type="entry name" value="PRK12851.1"/>
    <property type="match status" value="1"/>
</dbReference>
<dbReference type="PANTHER" id="PTHR45633">
    <property type="entry name" value="60 KDA HEAT SHOCK PROTEIN, MITOCHONDRIAL"/>
    <property type="match status" value="1"/>
</dbReference>
<dbReference type="Pfam" id="PF00118">
    <property type="entry name" value="Cpn60_TCP1"/>
    <property type="match status" value="1"/>
</dbReference>
<dbReference type="PRINTS" id="PR00298">
    <property type="entry name" value="CHAPERONIN60"/>
</dbReference>
<dbReference type="SUPFAM" id="SSF52029">
    <property type="entry name" value="GroEL apical domain-like"/>
    <property type="match status" value="1"/>
</dbReference>
<dbReference type="SUPFAM" id="SSF48592">
    <property type="entry name" value="GroEL equatorial domain-like"/>
    <property type="match status" value="2"/>
</dbReference>
<dbReference type="PROSITE" id="PS00296">
    <property type="entry name" value="CHAPERONINS_CPN60"/>
    <property type="match status" value="1"/>
</dbReference>
<name>CH60_LACGA</name>
<gene>
    <name evidence="1" type="primary">groEL</name>
    <name evidence="1" type="synonym">groL</name>
    <name type="ordered locus">LGAS_0409</name>
</gene>
<reference key="1">
    <citation type="journal article" date="2006" name="Proc. Natl. Acad. Sci. U.S.A.">
        <title>Comparative genomics of the lactic acid bacteria.</title>
        <authorList>
            <person name="Makarova K.S."/>
            <person name="Slesarev A."/>
            <person name="Wolf Y.I."/>
            <person name="Sorokin A."/>
            <person name="Mirkin B."/>
            <person name="Koonin E.V."/>
            <person name="Pavlov A."/>
            <person name="Pavlova N."/>
            <person name="Karamychev V."/>
            <person name="Polouchine N."/>
            <person name="Shakhova V."/>
            <person name="Grigoriev I."/>
            <person name="Lou Y."/>
            <person name="Rohksar D."/>
            <person name="Lucas S."/>
            <person name="Huang K."/>
            <person name="Goodstein D.M."/>
            <person name="Hawkins T."/>
            <person name="Plengvidhya V."/>
            <person name="Welker D."/>
            <person name="Hughes J."/>
            <person name="Goh Y."/>
            <person name="Benson A."/>
            <person name="Baldwin K."/>
            <person name="Lee J.-H."/>
            <person name="Diaz-Muniz I."/>
            <person name="Dosti B."/>
            <person name="Smeianov V."/>
            <person name="Wechter W."/>
            <person name="Barabote R."/>
            <person name="Lorca G."/>
            <person name="Altermann E."/>
            <person name="Barrangou R."/>
            <person name="Ganesan B."/>
            <person name="Xie Y."/>
            <person name="Rawsthorne H."/>
            <person name="Tamir D."/>
            <person name="Parker C."/>
            <person name="Breidt F."/>
            <person name="Broadbent J.R."/>
            <person name="Hutkins R."/>
            <person name="O'Sullivan D."/>
            <person name="Steele J."/>
            <person name="Unlu G."/>
            <person name="Saier M.H. Jr."/>
            <person name="Klaenhammer T."/>
            <person name="Richardson P."/>
            <person name="Kozyavkin S."/>
            <person name="Weimer B.C."/>
            <person name="Mills D.A."/>
        </authorList>
    </citation>
    <scope>NUCLEOTIDE SEQUENCE [LARGE SCALE GENOMIC DNA]</scope>
    <source>
        <strain>ATCC 33323 / DSM 20243 / BCRC 14619 / CIP 102991 / JCM 1131 / KCTC 3163 / NCIMB 11718 / NCTC 13722 / AM63</strain>
    </source>
</reference>
<protein>
    <recommendedName>
        <fullName evidence="1">Chaperonin GroEL</fullName>
        <ecNumber evidence="1">5.6.1.7</ecNumber>
    </recommendedName>
    <alternativeName>
        <fullName evidence="1">60 kDa chaperonin</fullName>
    </alternativeName>
    <alternativeName>
        <fullName evidence="1">Chaperonin-60</fullName>
        <shortName evidence="1">Cpn60</shortName>
    </alternativeName>
</protein>
<proteinExistence type="inferred from homology"/>
<keyword id="KW-0067">ATP-binding</keyword>
<keyword id="KW-0143">Chaperone</keyword>
<keyword id="KW-0963">Cytoplasm</keyword>
<keyword id="KW-0413">Isomerase</keyword>
<keyword id="KW-0547">Nucleotide-binding</keyword>
<organism>
    <name type="scientific">Lactobacillus gasseri (strain ATCC 33323 / DSM 20243 / BCRC 14619 / CIP 102991 / JCM 1131 / KCTC 3163 / NCIMB 11718 / NCTC 13722 / AM63)</name>
    <dbReference type="NCBI Taxonomy" id="324831"/>
    <lineage>
        <taxon>Bacteria</taxon>
        <taxon>Bacillati</taxon>
        <taxon>Bacillota</taxon>
        <taxon>Bacilli</taxon>
        <taxon>Lactobacillales</taxon>
        <taxon>Lactobacillaceae</taxon>
        <taxon>Lactobacillus</taxon>
    </lineage>
</organism>
<evidence type="ECO:0000255" key="1">
    <source>
        <dbReference type="HAMAP-Rule" id="MF_00600"/>
    </source>
</evidence>
<accession>Q045Q8</accession>
<feature type="chain" id="PRO_1000025800" description="Chaperonin GroEL">
    <location>
        <begin position="1"/>
        <end position="543"/>
    </location>
</feature>
<feature type="binding site" evidence="1">
    <location>
        <begin position="29"/>
        <end position="32"/>
    </location>
    <ligand>
        <name>ATP</name>
        <dbReference type="ChEBI" id="CHEBI:30616"/>
    </ligand>
</feature>
<feature type="binding site" evidence="1">
    <location>
        <begin position="86"/>
        <end position="90"/>
    </location>
    <ligand>
        <name>ATP</name>
        <dbReference type="ChEBI" id="CHEBI:30616"/>
    </ligand>
</feature>
<feature type="binding site" evidence="1">
    <location>
        <position position="413"/>
    </location>
    <ligand>
        <name>ATP</name>
        <dbReference type="ChEBI" id="CHEBI:30616"/>
    </ligand>
</feature>
<feature type="binding site" evidence="1">
    <location>
        <begin position="478"/>
        <end position="480"/>
    </location>
    <ligand>
        <name>ATP</name>
        <dbReference type="ChEBI" id="CHEBI:30616"/>
    </ligand>
</feature>
<feature type="binding site" evidence="1">
    <location>
        <position position="494"/>
    </location>
    <ligand>
        <name>ATP</name>
        <dbReference type="ChEBI" id="CHEBI:30616"/>
    </ligand>
</feature>
<sequence length="543" mass="57522">MAKDIKFSENARRSLLKGVDKLADTVKTTLGPKGRNVVLEKSYGAPDITNDGVTIAKSIDLKDHFENMGAKLVSEAAQKTNDIAGDGTTTATVLTQAIVREGMKNVTAGANPVGIRRGIETATKAAVDELHKISHKVSTKDEIAQVASVSSASTEVGNLIADAMEKVGHDGVITIEESKGIDTELSVVEGMQFDRGYLSQYMVTDNDKMEADLDNPYILITDKKISNIQDILPLLQEIVQQGKSLLIIADDVDGEALPTLVLNKIRGTFNVVAVKAPGFGDRRKAMLEDIAILTGGTVISSDLGLELKDTKIDQLGKAGKVTVTKDSTTIVEGAGSKDAISERVDQIKKQIADTTSDFDREKLQERLAKLAGGVAVIKVGAATETELKERKYRIEDALNATRAAVEEGYVAGGGTALVDVMKSIQGNVKGDSQDAQTGVNIVMKALGAPVRQIAENAGKDGAVILDHLEHEDPEIGYNAATDKWENMVKAGIIDPTKVTRSALQNAASIAALLLTTEAVVADAPEDDKNQAPAAPNPGMGMGM</sequence>
<comment type="function">
    <text evidence="1">Together with its co-chaperonin GroES, plays an essential role in assisting protein folding. The GroEL-GroES system forms a nano-cage that allows encapsulation of the non-native substrate proteins and provides a physical environment optimized to promote and accelerate protein folding.</text>
</comment>
<comment type="catalytic activity">
    <reaction evidence="1">
        <text>ATP + H2O + a folded polypeptide = ADP + phosphate + an unfolded polypeptide.</text>
        <dbReference type="EC" id="5.6.1.7"/>
    </reaction>
</comment>
<comment type="subunit">
    <text evidence="1">Forms a cylinder of 14 subunits composed of two heptameric rings stacked back-to-back. Interacts with the co-chaperonin GroES.</text>
</comment>
<comment type="subcellular location">
    <subcellularLocation>
        <location evidence="1">Cytoplasm</location>
    </subcellularLocation>
</comment>
<comment type="similarity">
    <text evidence="1">Belongs to the chaperonin (HSP60) family.</text>
</comment>